<name>GK_SUHVK</name>
<gene>
    <name type="primary">gK</name>
    <name type="ORF">UL53</name>
</gene>
<sequence length="312" mass="33796">MLLGGRPLHLLVLGVMGAYAGLGAYYATVARLPHPVVYAALPLGEDAAGGAPDWEAFNATAIYVAPNETDALSPALRDRARVVYARRDCRAYLWDVHFRLAAVAWLLYAAFVYARQERRMFGPFRDPAEFLTPEKYTLNYAASVLAATVIGCSYTKFAWYMAELATRRAALSRDLREDPITLAHRHPTLIALILLELGLRLGARMALFTTLGVTRAPCALVFPLYARALVWIFVLAVGALELLAATLPHIARVSGATATPARSDGGRAALGVCGACCSTVLAGIFAKALYLCLLVGGVLLFLHYERHITIFG</sequence>
<dbReference type="EMBL" id="X87246">
    <property type="protein sequence ID" value="CAA60692.1"/>
    <property type="molecule type" value="Genomic_DNA"/>
</dbReference>
<dbReference type="SMR" id="Q85230"/>
<dbReference type="GlyCosmos" id="Q85230">
    <property type="glycosylation" value="2 sites, No reported glycans"/>
</dbReference>
<dbReference type="GO" id="GO:0044175">
    <property type="term" value="C:host cell endosome membrane"/>
    <property type="evidence" value="ECO:0007669"/>
    <property type="project" value="UniProtKB-SubCell"/>
</dbReference>
<dbReference type="GO" id="GO:0044178">
    <property type="term" value="C:host cell Golgi membrane"/>
    <property type="evidence" value="ECO:0007669"/>
    <property type="project" value="UniProtKB-SubCell"/>
</dbReference>
<dbReference type="GO" id="GO:0020002">
    <property type="term" value="C:host cell plasma membrane"/>
    <property type="evidence" value="ECO:0007669"/>
    <property type="project" value="UniProtKB-SubCell"/>
</dbReference>
<dbReference type="GO" id="GO:0016020">
    <property type="term" value="C:membrane"/>
    <property type="evidence" value="ECO:0007669"/>
    <property type="project" value="UniProtKB-KW"/>
</dbReference>
<dbReference type="GO" id="GO:0039700">
    <property type="term" value="P:fusion of viral membrane with host outer nuclear membrane"/>
    <property type="evidence" value="ECO:0007669"/>
    <property type="project" value="UniProtKB-KW"/>
</dbReference>
<dbReference type="GO" id="GO:0060141">
    <property type="term" value="P:symbiont-mediated induction of syncytium formation"/>
    <property type="evidence" value="ECO:0007669"/>
    <property type="project" value="UniProtKB-KW"/>
</dbReference>
<dbReference type="InterPro" id="IPR002567">
    <property type="entry name" value="GK"/>
</dbReference>
<dbReference type="Pfam" id="PF01621">
    <property type="entry name" value="Fusion_gly_K"/>
    <property type="match status" value="1"/>
</dbReference>
<accession>Q85230</accession>
<reference key="1">
    <citation type="journal article" date="1995" name="J. Virol.">
        <title>Pseudorabies virus and equine herpesvirus 1 share a nonessential gene which is absent in other herpesviruses and located adjacent to a highly conserved gene cluster.</title>
        <authorList>
            <person name="Baumeister J."/>
            <person name="Klupp B.G."/>
            <person name="Mettenleiter T.C."/>
        </authorList>
    </citation>
    <scope>NUCLEOTIDE SEQUENCE [GENOMIC DNA]</scope>
</reference>
<keyword id="KW-0325">Glycoprotein</keyword>
<keyword id="KW-1032">Host cell membrane</keyword>
<keyword id="KW-1039">Host endosome</keyword>
<keyword id="KW-1040">Host Golgi apparatus</keyword>
<keyword id="KW-1043">Host membrane</keyword>
<keyword id="KW-0472">Membrane</keyword>
<keyword id="KW-0732">Signal</keyword>
<keyword id="KW-1180">Syncytium formation induced by viral infection</keyword>
<keyword id="KW-0812">Transmembrane</keyword>
<keyword id="KW-1133">Transmembrane helix</keyword>
<keyword id="KW-1181">Viral primary envelope fusion with host outer nuclear membrane</keyword>
<keyword id="KW-1188">Viral release from host cell</keyword>
<feature type="signal peptide" evidence="2">
    <location>
        <begin position="1"/>
        <end position="20"/>
    </location>
</feature>
<feature type="chain" id="PRO_0000038307" description="Envelope glycoprotein K">
    <location>
        <begin position="21"/>
        <end position="312"/>
    </location>
</feature>
<feature type="topological domain" description="Extracellular" evidence="2">
    <location>
        <begin position="21"/>
        <end position="91"/>
    </location>
</feature>
<feature type="transmembrane region" description="Helical" evidence="2">
    <location>
        <begin position="92"/>
        <end position="112"/>
    </location>
</feature>
<feature type="topological domain" description="Cytoplasmic" evidence="2">
    <location>
        <begin position="113"/>
        <end position="187"/>
    </location>
</feature>
<feature type="transmembrane region" description="Helical" evidence="2">
    <location>
        <begin position="188"/>
        <end position="208"/>
    </location>
</feature>
<feature type="topological domain" description="Extracellular" evidence="2">
    <location>
        <begin position="209"/>
        <end position="227"/>
    </location>
</feature>
<feature type="transmembrane region" description="Helical" evidence="2">
    <location>
        <begin position="228"/>
        <end position="248"/>
    </location>
</feature>
<feature type="topological domain" description="Cytoplasmic" evidence="2">
    <location>
        <begin position="249"/>
        <end position="280"/>
    </location>
</feature>
<feature type="transmembrane region" description="Helical" evidence="2">
    <location>
        <begin position="281"/>
        <end position="301"/>
    </location>
</feature>
<feature type="topological domain" description="Extracellular" evidence="2">
    <location>
        <begin position="302"/>
        <end position="312"/>
    </location>
</feature>
<feature type="glycosylation site" description="N-linked (GlcNAc...) asparagine; by host" evidence="2">
    <location>
        <position position="58"/>
    </location>
</feature>
<feature type="glycosylation site" description="N-linked (GlcNAc...) asparagine; by host" evidence="2">
    <location>
        <position position="67"/>
    </location>
</feature>
<evidence type="ECO:0000250" key="1"/>
<evidence type="ECO:0000255" key="2"/>
<evidence type="ECO:0000305" key="3"/>
<organismHost>
    <name type="scientific">Sus scrofa</name>
    <name type="common">Pig</name>
    <dbReference type="NCBI Taxonomy" id="9823"/>
</organismHost>
<organism>
    <name type="scientific">Suid herpesvirus 1 (strain Kaplan)</name>
    <name type="common">SuHV-1</name>
    <name type="synonym">Pseudorabies virus (strain Kaplan)</name>
    <dbReference type="NCBI Taxonomy" id="33703"/>
    <lineage>
        <taxon>Viruses</taxon>
        <taxon>Duplodnaviria</taxon>
        <taxon>Heunggongvirae</taxon>
        <taxon>Peploviricota</taxon>
        <taxon>Herviviricetes</taxon>
        <taxon>Herpesvirales</taxon>
        <taxon>Orthoherpesviridae</taxon>
        <taxon>Alphaherpesvirinae</taxon>
        <taxon>Varicellovirus</taxon>
        <taxon>Varicellovirus suidalpha1</taxon>
        <taxon>Suid herpesvirus 1</taxon>
    </lineage>
</organism>
<protein>
    <recommendedName>
        <fullName>Envelope glycoprotein K</fullName>
    </recommendedName>
    <alternativeName>
        <fullName>Syncytial protein</fullName>
    </alternativeName>
</protein>
<comment type="function">
    <text evidence="1">Glycoprotein that probably modulates membrane fusion events during secondary envelopment of cytoplasmic capsids that bud into specific trans-Golgi network (TGN)-derived membranes.</text>
</comment>
<comment type="subunit">
    <text>Interacts (via UL20 interaction region) with protein UL20 homolog (via N-terminus); this interaction probably plays a role in the coordinate transport of protein UL20 homolog and gK to the trans-Golgi network (TGN), and is required for the cell surface expression of gK.</text>
</comment>
<comment type="subcellular location">
    <subcellularLocation>
        <location>Host cell membrane</location>
        <topology>Multi-pass membrane protein</topology>
    </subcellularLocation>
    <subcellularLocation>
        <location evidence="1">Host endosome membrane</location>
        <topology evidence="1">Multi-pass membrane protein</topology>
    </subcellularLocation>
    <subcellularLocation>
        <location evidence="1">Host Golgi apparatus membrane</location>
        <topology evidence="1">Multi-pass membrane protein</topology>
    </subcellularLocation>
    <text evidence="1">During virion morphogenesis, this protein probably accumulates in the endosomes and trans-Golgi where secondary envelopment occurs. It is probably transported with UL20 to the cell surface from where it is endocytosed and directed to the trans-Golgi network (TGN). Cell surface expression of gK is required for virus-induced cell-to-cell fusion. Likely not present in extracellular virions (By similarity).</text>
</comment>
<comment type="PTM">
    <text evidence="1">N-glycosylated.</text>
</comment>
<comment type="similarity">
    <text evidence="3">Belongs to the alphaherpesvirinae glycoprotein K family.</text>
</comment>
<proteinExistence type="inferred from homology"/>